<accession>B6J074</accession>
<proteinExistence type="inferred from homology"/>
<gene>
    <name evidence="1" type="primary">bioB</name>
    <name type="ordered locus">CbuG_1000</name>
</gene>
<keyword id="KW-0001">2Fe-2S</keyword>
<keyword id="KW-0004">4Fe-4S</keyword>
<keyword id="KW-0093">Biotin biosynthesis</keyword>
<keyword id="KW-0408">Iron</keyword>
<keyword id="KW-0411">Iron-sulfur</keyword>
<keyword id="KW-0479">Metal-binding</keyword>
<keyword id="KW-0949">S-adenosyl-L-methionine</keyword>
<keyword id="KW-0808">Transferase</keyword>
<name>BIOB_COXB2</name>
<comment type="function">
    <text evidence="1">Catalyzes the conversion of dethiobiotin (DTB) to biotin by the insertion of a sulfur atom into dethiobiotin via a radical-based mechanism.</text>
</comment>
<comment type="catalytic activity">
    <reaction evidence="1">
        <text>(4R,5S)-dethiobiotin + (sulfur carrier)-SH + 2 reduced [2Fe-2S]-[ferredoxin] + 2 S-adenosyl-L-methionine = (sulfur carrier)-H + biotin + 2 5'-deoxyadenosine + 2 L-methionine + 2 oxidized [2Fe-2S]-[ferredoxin]</text>
        <dbReference type="Rhea" id="RHEA:22060"/>
        <dbReference type="Rhea" id="RHEA-COMP:10000"/>
        <dbReference type="Rhea" id="RHEA-COMP:10001"/>
        <dbReference type="Rhea" id="RHEA-COMP:14737"/>
        <dbReference type="Rhea" id="RHEA-COMP:14739"/>
        <dbReference type="ChEBI" id="CHEBI:17319"/>
        <dbReference type="ChEBI" id="CHEBI:29917"/>
        <dbReference type="ChEBI" id="CHEBI:33737"/>
        <dbReference type="ChEBI" id="CHEBI:33738"/>
        <dbReference type="ChEBI" id="CHEBI:57586"/>
        <dbReference type="ChEBI" id="CHEBI:57844"/>
        <dbReference type="ChEBI" id="CHEBI:59789"/>
        <dbReference type="ChEBI" id="CHEBI:64428"/>
        <dbReference type="ChEBI" id="CHEBI:149473"/>
        <dbReference type="EC" id="2.8.1.6"/>
    </reaction>
</comment>
<comment type="cofactor">
    <cofactor evidence="1">
        <name>[4Fe-4S] cluster</name>
        <dbReference type="ChEBI" id="CHEBI:49883"/>
    </cofactor>
    <text evidence="1">Binds 1 [4Fe-4S] cluster. The cluster is coordinated with 3 cysteines and an exchangeable S-adenosyl-L-methionine.</text>
</comment>
<comment type="cofactor">
    <cofactor evidence="1">
        <name>[2Fe-2S] cluster</name>
        <dbReference type="ChEBI" id="CHEBI:190135"/>
    </cofactor>
    <text evidence="1">Binds 1 [2Fe-2S] cluster. The cluster is coordinated with 3 cysteines and 1 arginine.</text>
</comment>
<comment type="pathway">
    <text evidence="1">Cofactor biosynthesis; biotin biosynthesis; biotin from 7,8-diaminononanoate: step 2/2.</text>
</comment>
<comment type="subunit">
    <text evidence="1">Homodimer.</text>
</comment>
<comment type="similarity">
    <text evidence="1">Belongs to the radical SAM superfamily. Biotin synthase family.</text>
</comment>
<sequence>MKGRNWNQASVAKLFELPFFELLYKAYETHRSHFDVRDMELCTLSSIKTGTCPEDCAYCPQSGHYKTDVEREKLINLEAVLEQAKVAKENGARRFCMGAAWRSPPKRELPKVLEMIKSVKALGLETCVTLGMLDQEQALQLKEAGLDFYNHNLDTSPEFYKKIITTRTYQDRMETLKNVRNAGINVCCGGILGMGESRADRIQLLLELYQLPEPPTSIPINQLIPIKGTPLENTKAIDPFEFIKTIAITRLLFPTSVIRLSAGREAMSDELQAWCFMAGANSIFYGDKLLTAKNPGQNRDVNLLKKLGLKVPVLTEEYACY</sequence>
<reference key="1">
    <citation type="journal article" date="2009" name="Infect. Immun.">
        <title>Comparative genomics reveal extensive transposon-mediated genomic plasticity and diversity among potential effector proteins within the genus Coxiella.</title>
        <authorList>
            <person name="Beare P.A."/>
            <person name="Unsworth N."/>
            <person name="Andoh M."/>
            <person name="Voth D.E."/>
            <person name="Omsland A."/>
            <person name="Gilk S.D."/>
            <person name="Williams K.P."/>
            <person name="Sobral B.W."/>
            <person name="Kupko J.J. III"/>
            <person name="Porcella S.F."/>
            <person name="Samuel J.E."/>
            <person name="Heinzen R.A."/>
        </authorList>
    </citation>
    <scope>NUCLEOTIDE SEQUENCE [LARGE SCALE GENOMIC DNA]</scope>
    <source>
        <strain>CbuG_Q212</strain>
    </source>
</reference>
<organism>
    <name type="scientific">Coxiella burnetii (strain CbuG_Q212)</name>
    <name type="common">Coxiella burnetii (strain Q212)</name>
    <dbReference type="NCBI Taxonomy" id="434923"/>
    <lineage>
        <taxon>Bacteria</taxon>
        <taxon>Pseudomonadati</taxon>
        <taxon>Pseudomonadota</taxon>
        <taxon>Gammaproteobacteria</taxon>
        <taxon>Legionellales</taxon>
        <taxon>Coxiellaceae</taxon>
        <taxon>Coxiella</taxon>
    </lineage>
</organism>
<dbReference type="EC" id="2.8.1.6" evidence="1"/>
<dbReference type="EMBL" id="CP001019">
    <property type="protein sequence ID" value="ACJ18352.1"/>
    <property type="molecule type" value="Genomic_DNA"/>
</dbReference>
<dbReference type="RefSeq" id="WP_005768604.1">
    <property type="nucleotide sequence ID" value="NC_011527.1"/>
</dbReference>
<dbReference type="SMR" id="B6J074"/>
<dbReference type="KEGG" id="cbg:CbuG_1000"/>
<dbReference type="HOGENOM" id="CLU_033172_1_2_6"/>
<dbReference type="UniPathway" id="UPA00078">
    <property type="reaction ID" value="UER00162"/>
</dbReference>
<dbReference type="GO" id="GO:0051537">
    <property type="term" value="F:2 iron, 2 sulfur cluster binding"/>
    <property type="evidence" value="ECO:0007669"/>
    <property type="project" value="UniProtKB-KW"/>
</dbReference>
<dbReference type="GO" id="GO:0051539">
    <property type="term" value="F:4 iron, 4 sulfur cluster binding"/>
    <property type="evidence" value="ECO:0007669"/>
    <property type="project" value="UniProtKB-KW"/>
</dbReference>
<dbReference type="GO" id="GO:0004076">
    <property type="term" value="F:biotin synthase activity"/>
    <property type="evidence" value="ECO:0007669"/>
    <property type="project" value="UniProtKB-UniRule"/>
</dbReference>
<dbReference type="GO" id="GO:0005506">
    <property type="term" value="F:iron ion binding"/>
    <property type="evidence" value="ECO:0007669"/>
    <property type="project" value="UniProtKB-UniRule"/>
</dbReference>
<dbReference type="GO" id="GO:0009102">
    <property type="term" value="P:biotin biosynthetic process"/>
    <property type="evidence" value="ECO:0007669"/>
    <property type="project" value="UniProtKB-UniRule"/>
</dbReference>
<dbReference type="CDD" id="cd01335">
    <property type="entry name" value="Radical_SAM"/>
    <property type="match status" value="1"/>
</dbReference>
<dbReference type="FunFam" id="3.20.20.70:FF:000011">
    <property type="entry name" value="Biotin synthase"/>
    <property type="match status" value="1"/>
</dbReference>
<dbReference type="Gene3D" id="3.20.20.70">
    <property type="entry name" value="Aldolase class I"/>
    <property type="match status" value="1"/>
</dbReference>
<dbReference type="HAMAP" id="MF_01694">
    <property type="entry name" value="BioB"/>
    <property type="match status" value="1"/>
</dbReference>
<dbReference type="InterPro" id="IPR013785">
    <property type="entry name" value="Aldolase_TIM"/>
</dbReference>
<dbReference type="InterPro" id="IPR010722">
    <property type="entry name" value="BATS_dom"/>
</dbReference>
<dbReference type="InterPro" id="IPR002684">
    <property type="entry name" value="Biotin_synth/BioAB"/>
</dbReference>
<dbReference type="InterPro" id="IPR024177">
    <property type="entry name" value="Biotin_synthase"/>
</dbReference>
<dbReference type="InterPro" id="IPR006638">
    <property type="entry name" value="Elp3/MiaA/NifB-like_rSAM"/>
</dbReference>
<dbReference type="InterPro" id="IPR007197">
    <property type="entry name" value="rSAM"/>
</dbReference>
<dbReference type="NCBIfam" id="TIGR00433">
    <property type="entry name" value="bioB"/>
    <property type="match status" value="1"/>
</dbReference>
<dbReference type="PANTHER" id="PTHR22976">
    <property type="entry name" value="BIOTIN SYNTHASE"/>
    <property type="match status" value="1"/>
</dbReference>
<dbReference type="PANTHER" id="PTHR22976:SF2">
    <property type="entry name" value="BIOTIN SYNTHASE, MITOCHONDRIAL"/>
    <property type="match status" value="1"/>
</dbReference>
<dbReference type="Pfam" id="PF06968">
    <property type="entry name" value="BATS"/>
    <property type="match status" value="1"/>
</dbReference>
<dbReference type="Pfam" id="PF04055">
    <property type="entry name" value="Radical_SAM"/>
    <property type="match status" value="1"/>
</dbReference>
<dbReference type="PIRSF" id="PIRSF001619">
    <property type="entry name" value="Biotin_synth"/>
    <property type="match status" value="1"/>
</dbReference>
<dbReference type="SFLD" id="SFLDG01060">
    <property type="entry name" value="BATS_domain_containing"/>
    <property type="match status" value="1"/>
</dbReference>
<dbReference type="SFLD" id="SFLDF00272">
    <property type="entry name" value="biotin_synthase"/>
    <property type="match status" value="1"/>
</dbReference>
<dbReference type="SMART" id="SM00876">
    <property type="entry name" value="BATS"/>
    <property type="match status" value="1"/>
</dbReference>
<dbReference type="SMART" id="SM00729">
    <property type="entry name" value="Elp3"/>
    <property type="match status" value="1"/>
</dbReference>
<dbReference type="SUPFAM" id="SSF102114">
    <property type="entry name" value="Radical SAM enzymes"/>
    <property type="match status" value="1"/>
</dbReference>
<dbReference type="PROSITE" id="PS51918">
    <property type="entry name" value="RADICAL_SAM"/>
    <property type="match status" value="1"/>
</dbReference>
<feature type="chain" id="PRO_0000381332" description="Biotin synthase">
    <location>
        <begin position="1"/>
        <end position="321"/>
    </location>
</feature>
<feature type="domain" description="Radical SAM core" evidence="2">
    <location>
        <begin position="37"/>
        <end position="264"/>
    </location>
</feature>
<feature type="binding site" evidence="1">
    <location>
        <position position="52"/>
    </location>
    <ligand>
        <name>[4Fe-4S] cluster</name>
        <dbReference type="ChEBI" id="CHEBI:49883"/>
        <note>4Fe-4S-S-AdoMet</note>
    </ligand>
</feature>
<feature type="binding site" evidence="1">
    <location>
        <position position="56"/>
    </location>
    <ligand>
        <name>[4Fe-4S] cluster</name>
        <dbReference type="ChEBI" id="CHEBI:49883"/>
        <note>4Fe-4S-S-AdoMet</note>
    </ligand>
</feature>
<feature type="binding site" evidence="1">
    <location>
        <position position="59"/>
    </location>
    <ligand>
        <name>[4Fe-4S] cluster</name>
        <dbReference type="ChEBI" id="CHEBI:49883"/>
        <note>4Fe-4S-S-AdoMet</note>
    </ligand>
</feature>
<feature type="binding site" evidence="1">
    <location>
        <position position="96"/>
    </location>
    <ligand>
        <name>[2Fe-2S] cluster</name>
        <dbReference type="ChEBI" id="CHEBI:190135"/>
    </ligand>
</feature>
<feature type="binding site" evidence="1">
    <location>
        <position position="127"/>
    </location>
    <ligand>
        <name>[2Fe-2S] cluster</name>
        <dbReference type="ChEBI" id="CHEBI:190135"/>
    </ligand>
</feature>
<feature type="binding site" evidence="1">
    <location>
        <position position="187"/>
    </location>
    <ligand>
        <name>[2Fe-2S] cluster</name>
        <dbReference type="ChEBI" id="CHEBI:190135"/>
    </ligand>
</feature>
<feature type="binding site" evidence="1">
    <location>
        <position position="259"/>
    </location>
    <ligand>
        <name>[2Fe-2S] cluster</name>
        <dbReference type="ChEBI" id="CHEBI:190135"/>
    </ligand>
</feature>
<protein>
    <recommendedName>
        <fullName evidence="1">Biotin synthase</fullName>
        <ecNumber evidence="1">2.8.1.6</ecNumber>
    </recommendedName>
</protein>
<evidence type="ECO:0000255" key="1">
    <source>
        <dbReference type="HAMAP-Rule" id="MF_01694"/>
    </source>
</evidence>
<evidence type="ECO:0000255" key="2">
    <source>
        <dbReference type="PROSITE-ProRule" id="PRU01266"/>
    </source>
</evidence>